<gene>
    <name evidence="1" type="primary">cca</name>
    <name type="ordered locus">LMOf2365_1934</name>
</gene>
<feature type="chain" id="PRO_0000139042" description="CCA-adding enzyme">
    <location>
        <begin position="1"/>
        <end position="393"/>
    </location>
</feature>
<feature type="binding site" evidence="1">
    <location>
        <position position="27"/>
    </location>
    <ligand>
        <name>ATP</name>
        <dbReference type="ChEBI" id="CHEBI:30616"/>
    </ligand>
</feature>
<feature type="binding site" evidence="1">
    <location>
        <position position="27"/>
    </location>
    <ligand>
        <name>CTP</name>
        <dbReference type="ChEBI" id="CHEBI:37563"/>
    </ligand>
</feature>
<feature type="binding site" evidence="1">
    <location>
        <position position="30"/>
    </location>
    <ligand>
        <name>ATP</name>
        <dbReference type="ChEBI" id="CHEBI:30616"/>
    </ligand>
</feature>
<feature type="binding site" evidence="1">
    <location>
        <position position="30"/>
    </location>
    <ligand>
        <name>CTP</name>
        <dbReference type="ChEBI" id="CHEBI:37563"/>
    </ligand>
</feature>
<feature type="binding site" evidence="1">
    <location>
        <position position="40"/>
    </location>
    <ligand>
        <name>Mg(2+)</name>
        <dbReference type="ChEBI" id="CHEBI:18420"/>
    </ligand>
</feature>
<feature type="binding site" evidence="1">
    <location>
        <position position="42"/>
    </location>
    <ligand>
        <name>Mg(2+)</name>
        <dbReference type="ChEBI" id="CHEBI:18420"/>
    </ligand>
</feature>
<feature type="binding site" evidence="1">
    <location>
        <position position="111"/>
    </location>
    <ligand>
        <name>ATP</name>
        <dbReference type="ChEBI" id="CHEBI:30616"/>
    </ligand>
</feature>
<feature type="binding site" evidence="1">
    <location>
        <position position="111"/>
    </location>
    <ligand>
        <name>CTP</name>
        <dbReference type="ChEBI" id="CHEBI:37563"/>
    </ligand>
</feature>
<feature type="binding site" evidence="1">
    <location>
        <position position="154"/>
    </location>
    <ligand>
        <name>ATP</name>
        <dbReference type="ChEBI" id="CHEBI:30616"/>
    </ligand>
</feature>
<feature type="binding site" evidence="1">
    <location>
        <position position="154"/>
    </location>
    <ligand>
        <name>CTP</name>
        <dbReference type="ChEBI" id="CHEBI:37563"/>
    </ligand>
</feature>
<feature type="binding site" evidence="1">
    <location>
        <position position="157"/>
    </location>
    <ligand>
        <name>ATP</name>
        <dbReference type="ChEBI" id="CHEBI:30616"/>
    </ligand>
</feature>
<feature type="binding site" evidence="1">
    <location>
        <position position="157"/>
    </location>
    <ligand>
        <name>CTP</name>
        <dbReference type="ChEBI" id="CHEBI:37563"/>
    </ligand>
</feature>
<feature type="binding site" evidence="1">
    <location>
        <position position="160"/>
    </location>
    <ligand>
        <name>ATP</name>
        <dbReference type="ChEBI" id="CHEBI:30616"/>
    </ligand>
</feature>
<feature type="binding site" evidence="1">
    <location>
        <position position="160"/>
    </location>
    <ligand>
        <name>CTP</name>
        <dbReference type="ChEBI" id="CHEBI:37563"/>
    </ligand>
</feature>
<feature type="binding site" evidence="1">
    <location>
        <position position="163"/>
    </location>
    <ligand>
        <name>ATP</name>
        <dbReference type="ChEBI" id="CHEBI:30616"/>
    </ligand>
</feature>
<feature type="binding site" evidence="1">
    <location>
        <position position="163"/>
    </location>
    <ligand>
        <name>CTP</name>
        <dbReference type="ChEBI" id="CHEBI:37563"/>
    </ligand>
</feature>
<proteinExistence type="inferred from homology"/>
<evidence type="ECO:0000255" key="1">
    <source>
        <dbReference type="HAMAP-Rule" id="MF_01263"/>
    </source>
</evidence>
<sequence>MNDVFLKALPVLQKLTTAGFEAYFVGGSVRDYLLNRTISDVDIATSAFPEEVKEIFQTSYDTGIAHGTVTVRENNEFYEVTTFRTEGTYEDFRRPSEVTFIRSLEEDLKRRDFTMNAIAMDEHFALQDPFSGQLAIQNKEIKAVGKASERFHEDALRMMRAVRFLSQLDFELDKETEKALESQIELLQHTSVERITVEWLKMMKGKAAKRAIELLLKVKMETYLPGLKDEKSALSEFASWDWEKRTTEESIWLGLVVAVKPNNVNAFLKAWKLPNKTIQLVNKAYQDALKMKETWLKDELYHAGKAVFSLVNELNVIRGKENNQHKVSQAYEALPIHSKKDLAITGADLLKWSGESAGPWVKETLDKVECGVLSNEINNEKIQIKRWLGYHEE</sequence>
<keyword id="KW-0067">ATP-binding</keyword>
<keyword id="KW-0460">Magnesium</keyword>
<keyword id="KW-0479">Metal-binding</keyword>
<keyword id="KW-0547">Nucleotide-binding</keyword>
<keyword id="KW-0548">Nucleotidyltransferase</keyword>
<keyword id="KW-0692">RNA repair</keyword>
<keyword id="KW-0694">RNA-binding</keyword>
<keyword id="KW-0808">Transferase</keyword>
<keyword id="KW-0819">tRNA processing</keyword>
<protein>
    <recommendedName>
        <fullName evidence="1">CCA-adding enzyme</fullName>
        <ecNumber evidence="1">2.7.7.72</ecNumber>
    </recommendedName>
    <alternativeName>
        <fullName evidence="1">CCA tRNA nucleotidyltransferase</fullName>
    </alternativeName>
    <alternativeName>
        <fullName evidence="1">tRNA CCA-pyrophosphorylase</fullName>
    </alternativeName>
    <alternativeName>
        <fullName evidence="1">tRNA adenylyl-/cytidylyl- transferase</fullName>
    </alternativeName>
    <alternativeName>
        <fullName evidence="1">tRNA nucleotidyltransferase</fullName>
    </alternativeName>
    <alternativeName>
        <fullName evidence="1">tRNA-NT</fullName>
    </alternativeName>
</protein>
<comment type="function">
    <text evidence="1">Catalyzes the addition and repair of the essential 3'-terminal CCA sequence in tRNAs without using a nucleic acid template. Adds these three nucleotides in the order of C, C, and A to the tRNA nucleotide-73, using CTP and ATP as substrates and producing inorganic pyrophosphate. tRNA 3'-terminal CCA addition is required both for tRNA processing and repair. Also involved in tRNA surveillance by mediating tandem CCA addition to generate a CCACCA at the 3' terminus of unstable tRNAs. While stable tRNAs receive only 3'-terminal CCA, unstable tRNAs are marked with CCACCA and rapidly degraded.</text>
</comment>
<comment type="catalytic activity">
    <reaction evidence="1">
        <text>a tRNA precursor + 2 CTP + ATP = a tRNA with a 3' CCA end + 3 diphosphate</text>
        <dbReference type="Rhea" id="RHEA:14433"/>
        <dbReference type="Rhea" id="RHEA-COMP:10465"/>
        <dbReference type="Rhea" id="RHEA-COMP:10468"/>
        <dbReference type="ChEBI" id="CHEBI:30616"/>
        <dbReference type="ChEBI" id="CHEBI:33019"/>
        <dbReference type="ChEBI" id="CHEBI:37563"/>
        <dbReference type="ChEBI" id="CHEBI:74896"/>
        <dbReference type="ChEBI" id="CHEBI:83071"/>
        <dbReference type="EC" id="2.7.7.72"/>
    </reaction>
</comment>
<comment type="catalytic activity">
    <reaction evidence="1">
        <text>a tRNA with a 3' CCA end + 2 CTP + ATP = a tRNA with a 3' CCACCA end + 3 diphosphate</text>
        <dbReference type="Rhea" id="RHEA:76235"/>
        <dbReference type="Rhea" id="RHEA-COMP:10468"/>
        <dbReference type="Rhea" id="RHEA-COMP:18655"/>
        <dbReference type="ChEBI" id="CHEBI:30616"/>
        <dbReference type="ChEBI" id="CHEBI:33019"/>
        <dbReference type="ChEBI" id="CHEBI:37563"/>
        <dbReference type="ChEBI" id="CHEBI:83071"/>
        <dbReference type="ChEBI" id="CHEBI:195187"/>
    </reaction>
    <physiologicalReaction direction="left-to-right" evidence="1">
        <dbReference type="Rhea" id="RHEA:76236"/>
    </physiologicalReaction>
</comment>
<comment type="cofactor">
    <cofactor evidence="1">
        <name>Mg(2+)</name>
        <dbReference type="ChEBI" id="CHEBI:18420"/>
    </cofactor>
</comment>
<comment type="subunit">
    <text evidence="1">Homodimer.</text>
</comment>
<comment type="miscellaneous">
    <text evidence="1">A single active site specifically recognizes both ATP and CTP and is responsible for their addition.</text>
</comment>
<comment type="similarity">
    <text evidence="1">Belongs to the tRNA nucleotidyltransferase/poly(A) polymerase family. Bacterial CCA-adding enzyme type 3 subfamily.</text>
</comment>
<name>CCA_LISMF</name>
<accession>Q71YB0</accession>
<organism>
    <name type="scientific">Listeria monocytogenes serotype 4b (strain F2365)</name>
    <dbReference type="NCBI Taxonomy" id="265669"/>
    <lineage>
        <taxon>Bacteria</taxon>
        <taxon>Bacillati</taxon>
        <taxon>Bacillota</taxon>
        <taxon>Bacilli</taxon>
        <taxon>Bacillales</taxon>
        <taxon>Listeriaceae</taxon>
        <taxon>Listeria</taxon>
    </lineage>
</organism>
<reference key="1">
    <citation type="journal article" date="2004" name="Nucleic Acids Res.">
        <title>Whole genome comparisons of serotype 4b and 1/2a strains of the food-borne pathogen Listeria monocytogenes reveal new insights into the core genome components of this species.</title>
        <authorList>
            <person name="Nelson K.E."/>
            <person name="Fouts D.E."/>
            <person name="Mongodin E.F."/>
            <person name="Ravel J."/>
            <person name="DeBoy R.T."/>
            <person name="Kolonay J.F."/>
            <person name="Rasko D.A."/>
            <person name="Angiuoli S.V."/>
            <person name="Gill S.R."/>
            <person name="Paulsen I.T."/>
            <person name="Peterson J.D."/>
            <person name="White O."/>
            <person name="Nelson W.C."/>
            <person name="Nierman W.C."/>
            <person name="Beanan M.J."/>
            <person name="Brinkac L.M."/>
            <person name="Daugherty S.C."/>
            <person name="Dodson R.J."/>
            <person name="Durkin A.S."/>
            <person name="Madupu R."/>
            <person name="Haft D.H."/>
            <person name="Selengut J."/>
            <person name="Van Aken S.E."/>
            <person name="Khouri H.M."/>
            <person name="Fedorova N."/>
            <person name="Forberger H.A."/>
            <person name="Tran B."/>
            <person name="Kathariou S."/>
            <person name="Wonderling L.D."/>
            <person name="Uhlich G.A."/>
            <person name="Bayles D.O."/>
            <person name="Luchansky J.B."/>
            <person name="Fraser C.M."/>
        </authorList>
    </citation>
    <scope>NUCLEOTIDE SEQUENCE [LARGE SCALE GENOMIC DNA]</scope>
    <source>
        <strain>F2365</strain>
    </source>
</reference>
<dbReference type="EC" id="2.7.7.72" evidence="1"/>
<dbReference type="EMBL" id="AE017262">
    <property type="protein sequence ID" value="AAT04704.1"/>
    <property type="molecule type" value="Genomic_DNA"/>
</dbReference>
<dbReference type="RefSeq" id="WP_009928121.1">
    <property type="nucleotide sequence ID" value="NC_002973.6"/>
</dbReference>
<dbReference type="SMR" id="Q71YB0"/>
<dbReference type="KEGG" id="lmf:LMOf2365_1934"/>
<dbReference type="HOGENOM" id="CLU_015961_3_0_9"/>
<dbReference type="GO" id="GO:0005524">
    <property type="term" value="F:ATP binding"/>
    <property type="evidence" value="ECO:0007669"/>
    <property type="project" value="UniProtKB-UniRule"/>
</dbReference>
<dbReference type="GO" id="GO:0004810">
    <property type="term" value="F:CCA tRNA nucleotidyltransferase activity"/>
    <property type="evidence" value="ECO:0007669"/>
    <property type="project" value="UniProtKB-UniRule"/>
</dbReference>
<dbReference type="GO" id="GO:0000287">
    <property type="term" value="F:magnesium ion binding"/>
    <property type="evidence" value="ECO:0007669"/>
    <property type="project" value="UniProtKB-UniRule"/>
</dbReference>
<dbReference type="GO" id="GO:0000049">
    <property type="term" value="F:tRNA binding"/>
    <property type="evidence" value="ECO:0007669"/>
    <property type="project" value="UniProtKB-UniRule"/>
</dbReference>
<dbReference type="GO" id="GO:0042245">
    <property type="term" value="P:RNA repair"/>
    <property type="evidence" value="ECO:0007669"/>
    <property type="project" value="UniProtKB-KW"/>
</dbReference>
<dbReference type="GO" id="GO:0001680">
    <property type="term" value="P:tRNA 3'-terminal CCA addition"/>
    <property type="evidence" value="ECO:0007669"/>
    <property type="project" value="UniProtKB-UniRule"/>
</dbReference>
<dbReference type="CDD" id="cd05398">
    <property type="entry name" value="NT_ClassII-CCAase"/>
    <property type="match status" value="1"/>
</dbReference>
<dbReference type="FunFam" id="3.30.460.10:FF:000057">
    <property type="entry name" value="CCA-adding enzyme"/>
    <property type="match status" value="1"/>
</dbReference>
<dbReference type="Gene3D" id="1.10.110.30">
    <property type="match status" value="1"/>
</dbReference>
<dbReference type="Gene3D" id="1.10.246.80">
    <property type="match status" value="1"/>
</dbReference>
<dbReference type="Gene3D" id="1.20.58.560">
    <property type="match status" value="1"/>
</dbReference>
<dbReference type="Gene3D" id="3.30.460.10">
    <property type="entry name" value="Beta Polymerase, domain 2"/>
    <property type="match status" value="1"/>
</dbReference>
<dbReference type="HAMAP" id="MF_01263">
    <property type="entry name" value="CCA_bact_type3"/>
    <property type="match status" value="1"/>
</dbReference>
<dbReference type="InterPro" id="IPR050264">
    <property type="entry name" value="Bact_CCA-adding_enz_type3_sf"/>
</dbReference>
<dbReference type="InterPro" id="IPR032810">
    <property type="entry name" value="CCA-adding_enz_C"/>
</dbReference>
<dbReference type="InterPro" id="IPR023068">
    <property type="entry name" value="CCA-adding_enz_firmicutes"/>
</dbReference>
<dbReference type="InterPro" id="IPR043519">
    <property type="entry name" value="NT_sf"/>
</dbReference>
<dbReference type="InterPro" id="IPR002646">
    <property type="entry name" value="PolA_pol_head_dom"/>
</dbReference>
<dbReference type="InterPro" id="IPR032828">
    <property type="entry name" value="PolyA_RNA-bd"/>
</dbReference>
<dbReference type="NCBIfam" id="NF009814">
    <property type="entry name" value="PRK13299.1"/>
    <property type="match status" value="1"/>
</dbReference>
<dbReference type="PANTHER" id="PTHR46173">
    <property type="entry name" value="CCA TRNA NUCLEOTIDYLTRANSFERASE 1, MITOCHONDRIAL"/>
    <property type="match status" value="1"/>
</dbReference>
<dbReference type="PANTHER" id="PTHR46173:SF1">
    <property type="entry name" value="CCA TRNA NUCLEOTIDYLTRANSFERASE 1, MITOCHONDRIAL"/>
    <property type="match status" value="1"/>
</dbReference>
<dbReference type="Pfam" id="PF01743">
    <property type="entry name" value="PolyA_pol"/>
    <property type="match status" value="1"/>
</dbReference>
<dbReference type="Pfam" id="PF12627">
    <property type="entry name" value="PolyA_pol_RNAbd"/>
    <property type="match status" value="1"/>
</dbReference>
<dbReference type="Pfam" id="PF13735">
    <property type="entry name" value="tRNA_NucTran2_2"/>
    <property type="match status" value="1"/>
</dbReference>
<dbReference type="SUPFAM" id="SSF81301">
    <property type="entry name" value="Nucleotidyltransferase"/>
    <property type="match status" value="1"/>
</dbReference>
<dbReference type="SUPFAM" id="SSF81891">
    <property type="entry name" value="Poly A polymerase C-terminal region-like"/>
    <property type="match status" value="1"/>
</dbReference>